<accession>Q46XB8</accession>
<evidence type="ECO:0000255" key="1">
    <source>
        <dbReference type="HAMAP-Rule" id="MF_00766"/>
    </source>
</evidence>
<feature type="chain" id="PRO_0000257683" description="Biosynthetic peptidoglycan transglycosylase">
    <location>
        <begin position="1"/>
        <end position="252"/>
    </location>
</feature>
<feature type="transmembrane region" description="Helical" evidence="1">
    <location>
        <begin position="23"/>
        <end position="43"/>
    </location>
</feature>
<gene>
    <name evidence="1" type="primary">mtgA</name>
    <name type="ordered locus">Reut_A2854</name>
</gene>
<sequence length="252" mass="28520">MPVATRQRSARAAGTAFSPLRWIGFLLGCIVAGVVAMQVYFFLQIAAWQYVAPSSTSFMRAERWRLCGFNVWNCSIDRRWVPYDQISRNLKRAVIASEDADFVNHPGYEIDAMLDAWERNKKRGRVVRGGSTITQQLAKNLFLSSEQHYLRKGQELAITWMLEFWLDKQRIFEIYLNSVEWGEGVFGAEAAAQHYFRTNAGKLGVGQAARLAAALPAPKCFDKKEYCANVRVNFRVKAGIIARRMGAATLPD</sequence>
<comment type="function">
    <text evidence="1">Peptidoglycan polymerase that catalyzes glycan chain elongation from lipid-linked precursors.</text>
</comment>
<comment type="catalytic activity">
    <reaction evidence="1">
        <text>[GlcNAc-(1-&gt;4)-Mur2Ac(oyl-L-Ala-gamma-D-Glu-L-Lys-D-Ala-D-Ala)](n)-di-trans,octa-cis-undecaprenyl diphosphate + beta-D-GlcNAc-(1-&gt;4)-Mur2Ac(oyl-L-Ala-gamma-D-Glu-L-Lys-D-Ala-D-Ala)-di-trans,octa-cis-undecaprenyl diphosphate = [GlcNAc-(1-&gt;4)-Mur2Ac(oyl-L-Ala-gamma-D-Glu-L-Lys-D-Ala-D-Ala)](n+1)-di-trans,octa-cis-undecaprenyl diphosphate + di-trans,octa-cis-undecaprenyl diphosphate + H(+)</text>
        <dbReference type="Rhea" id="RHEA:23708"/>
        <dbReference type="Rhea" id="RHEA-COMP:9602"/>
        <dbReference type="Rhea" id="RHEA-COMP:9603"/>
        <dbReference type="ChEBI" id="CHEBI:15378"/>
        <dbReference type="ChEBI" id="CHEBI:58405"/>
        <dbReference type="ChEBI" id="CHEBI:60033"/>
        <dbReference type="ChEBI" id="CHEBI:78435"/>
        <dbReference type="EC" id="2.4.99.28"/>
    </reaction>
</comment>
<comment type="pathway">
    <text evidence="1">Cell wall biogenesis; peptidoglycan biosynthesis.</text>
</comment>
<comment type="subcellular location">
    <subcellularLocation>
        <location evidence="1">Cell inner membrane</location>
        <topology evidence="1">Single-pass membrane protein</topology>
    </subcellularLocation>
</comment>
<comment type="similarity">
    <text evidence="1">Belongs to the glycosyltransferase 51 family.</text>
</comment>
<organism>
    <name type="scientific">Cupriavidus pinatubonensis (strain JMP 134 / LMG 1197)</name>
    <name type="common">Cupriavidus necator (strain JMP 134)</name>
    <dbReference type="NCBI Taxonomy" id="264198"/>
    <lineage>
        <taxon>Bacteria</taxon>
        <taxon>Pseudomonadati</taxon>
        <taxon>Pseudomonadota</taxon>
        <taxon>Betaproteobacteria</taxon>
        <taxon>Burkholderiales</taxon>
        <taxon>Burkholderiaceae</taxon>
        <taxon>Cupriavidus</taxon>
    </lineage>
</organism>
<proteinExistence type="inferred from homology"/>
<keyword id="KW-0997">Cell inner membrane</keyword>
<keyword id="KW-1003">Cell membrane</keyword>
<keyword id="KW-0133">Cell shape</keyword>
<keyword id="KW-0961">Cell wall biogenesis/degradation</keyword>
<keyword id="KW-0328">Glycosyltransferase</keyword>
<keyword id="KW-0472">Membrane</keyword>
<keyword id="KW-0573">Peptidoglycan synthesis</keyword>
<keyword id="KW-0808">Transferase</keyword>
<keyword id="KW-0812">Transmembrane</keyword>
<keyword id="KW-1133">Transmembrane helix</keyword>
<reference key="1">
    <citation type="journal article" date="2010" name="PLoS ONE">
        <title>The complete multipartite genome sequence of Cupriavidus necator JMP134, a versatile pollutant degrader.</title>
        <authorList>
            <person name="Lykidis A."/>
            <person name="Perez-Pantoja D."/>
            <person name="Ledger T."/>
            <person name="Mavromatis K."/>
            <person name="Anderson I.J."/>
            <person name="Ivanova N.N."/>
            <person name="Hooper S.D."/>
            <person name="Lapidus A."/>
            <person name="Lucas S."/>
            <person name="Gonzalez B."/>
            <person name="Kyrpides N.C."/>
        </authorList>
    </citation>
    <scope>NUCLEOTIDE SEQUENCE [LARGE SCALE GENOMIC DNA]</scope>
    <source>
        <strain>JMP134 / LMG 1197</strain>
    </source>
</reference>
<protein>
    <recommendedName>
        <fullName evidence="1">Biosynthetic peptidoglycan transglycosylase</fullName>
        <ecNumber evidence="1">2.4.99.28</ecNumber>
    </recommendedName>
    <alternativeName>
        <fullName evidence="1">Glycan polymerase</fullName>
    </alternativeName>
    <alternativeName>
        <fullName evidence="1">Peptidoglycan glycosyltransferase MtgA</fullName>
        <shortName evidence="1">PGT</shortName>
    </alternativeName>
</protein>
<dbReference type="EC" id="2.4.99.28" evidence="1"/>
<dbReference type="EMBL" id="CP000090">
    <property type="protein sequence ID" value="AAZ62215.1"/>
    <property type="molecule type" value="Genomic_DNA"/>
</dbReference>
<dbReference type="SMR" id="Q46XB8"/>
<dbReference type="STRING" id="264198.Reut_A2854"/>
<dbReference type="CAZy" id="GT51">
    <property type="family name" value="Glycosyltransferase Family 51"/>
</dbReference>
<dbReference type="KEGG" id="reu:Reut_A2854"/>
<dbReference type="eggNOG" id="COG0744">
    <property type="taxonomic scope" value="Bacteria"/>
</dbReference>
<dbReference type="HOGENOM" id="CLU_006354_1_0_4"/>
<dbReference type="UniPathway" id="UPA00219"/>
<dbReference type="GO" id="GO:0009274">
    <property type="term" value="C:peptidoglycan-based cell wall"/>
    <property type="evidence" value="ECO:0007669"/>
    <property type="project" value="InterPro"/>
</dbReference>
<dbReference type="GO" id="GO:0005886">
    <property type="term" value="C:plasma membrane"/>
    <property type="evidence" value="ECO:0007669"/>
    <property type="project" value="UniProtKB-SubCell"/>
</dbReference>
<dbReference type="GO" id="GO:0016763">
    <property type="term" value="F:pentosyltransferase activity"/>
    <property type="evidence" value="ECO:0007669"/>
    <property type="project" value="InterPro"/>
</dbReference>
<dbReference type="GO" id="GO:0008955">
    <property type="term" value="F:peptidoglycan glycosyltransferase activity"/>
    <property type="evidence" value="ECO:0007669"/>
    <property type="project" value="UniProtKB-UniRule"/>
</dbReference>
<dbReference type="GO" id="GO:0071555">
    <property type="term" value="P:cell wall organization"/>
    <property type="evidence" value="ECO:0007669"/>
    <property type="project" value="UniProtKB-KW"/>
</dbReference>
<dbReference type="GO" id="GO:0009252">
    <property type="term" value="P:peptidoglycan biosynthetic process"/>
    <property type="evidence" value="ECO:0007669"/>
    <property type="project" value="UniProtKB-UniRule"/>
</dbReference>
<dbReference type="GO" id="GO:0008360">
    <property type="term" value="P:regulation of cell shape"/>
    <property type="evidence" value="ECO:0007669"/>
    <property type="project" value="UniProtKB-KW"/>
</dbReference>
<dbReference type="Gene3D" id="1.10.3810.10">
    <property type="entry name" value="Biosynthetic peptidoglycan transglycosylase-like"/>
    <property type="match status" value="1"/>
</dbReference>
<dbReference type="HAMAP" id="MF_00766">
    <property type="entry name" value="PGT_MtgA"/>
    <property type="match status" value="1"/>
</dbReference>
<dbReference type="InterPro" id="IPR001264">
    <property type="entry name" value="Glyco_trans_51"/>
</dbReference>
<dbReference type="InterPro" id="IPR023346">
    <property type="entry name" value="Lysozyme-like_dom_sf"/>
</dbReference>
<dbReference type="InterPro" id="IPR036950">
    <property type="entry name" value="PBP_transglycosylase"/>
</dbReference>
<dbReference type="InterPro" id="IPR011812">
    <property type="entry name" value="Pep_trsgly"/>
</dbReference>
<dbReference type="NCBIfam" id="TIGR02070">
    <property type="entry name" value="mono_pep_trsgly"/>
    <property type="match status" value="1"/>
</dbReference>
<dbReference type="PANTHER" id="PTHR30400:SF0">
    <property type="entry name" value="BIOSYNTHETIC PEPTIDOGLYCAN TRANSGLYCOSYLASE"/>
    <property type="match status" value="1"/>
</dbReference>
<dbReference type="PANTHER" id="PTHR30400">
    <property type="entry name" value="MONOFUNCTIONAL BIOSYNTHETIC PEPTIDOGLYCAN TRANSGLYCOSYLASE"/>
    <property type="match status" value="1"/>
</dbReference>
<dbReference type="Pfam" id="PF00912">
    <property type="entry name" value="Transgly"/>
    <property type="match status" value="1"/>
</dbReference>
<dbReference type="SUPFAM" id="SSF53955">
    <property type="entry name" value="Lysozyme-like"/>
    <property type="match status" value="1"/>
</dbReference>
<name>MTGA_CUPPJ</name>